<keyword id="KW-0520">NAD</keyword>
<keyword id="KW-0560">Oxidoreductase</keyword>
<keyword id="KW-0816">Tricarboxylic acid cycle</keyword>
<comment type="function">
    <text evidence="1">Catalyzes the reversible oxidation of malate to oxaloacetate.</text>
</comment>
<comment type="catalytic activity">
    <reaction evidence="1">
        <text>(S)-malate + NAD(+) = oxaloacetate + NADH + H(+)</text>
        <dbReference type="Rhea" id="RHEA:21432"/>
        <dbReference type="ChEBI" id="CHEBI:15378"/>
        <dbReference type="ChEBI" id="CHEBI:15589"/>
        <dbReference type="ChEBI" id="CHEBI:16452"/>
        <dbReference type="ChEBI" id="CHEBI:57540"/>
        <dbReference type="ChEBI" id="CHEBI:57945"/>
        <dbReference type="EC" id="1.1.1.37"/>
    </reaction>
</comment>
<comment type="similarity">
    <text evidence="1">Belongs to the LDH/MDH superfamily. MDH type 2 family.</text>
</comment>
<accession>Q6A6Z5</accession>
<feature type="chain" id="PRO_0000113387" description="Malate dehydrogenase">
    <location>
        <begin position="1"/>
        <end position="327"/>
    </location>
</feature>
<feature type="active site" description="Proton acceptor" evidence="1">
    <location>
        <position position="187"/>
    </location>
</feature>
<feature type="binding site" evidence="1">
    <location>
        <begin position="12"/>
        <end position="18"/>
    </location>
    <ligand>
        <name>NAD(+)</name>
        <dbReference type="ChEBI" id="CHEBI:57540"/>
    </ligand>
</feature>
<feature type="binding site" evidence="1">
    <location>
        <position position="92"/>
    </location>
    <ligand>
        <name>substrate</name>
    </ligand>
</feature>
<feature type="binding site" evidence="1">
    <location>
        <position position="98"/>
    </location>
    <ligand>
        <name>substrate</name>
    </ligand>
</feature>
<feature type="binding site" evidence="1">
    <location>
        <position position="105"/>
    </location>
    <ligand>
        <name>NAD(+)</name>
        <dbReference type="ChEBI" id="CHEBI:57540"/>
    </ligand>
</feature>
<feature type="binding site" evidence="1">
    <location>
        <position position="112"/>
    </location>
    <ligand>
        <name>NAD(+)</name>
        <dbReference type="ChEBI" id="CHEBI:57540"/>
    </ligand>
</feature>
<feature type="binding site" evidence="1">
    <location>
        <begin position="129"/>
        <end position="131"/>
    </location>
    <ligand>
        <name>NAD(+)</name>
        <dbReference type="ChEBI" id="CHEBI:57540"/>
    </ligand>
</feature>
<feature type="binding site" evidence="1">
    <location>
        <position position="131"/>
    </location>
    <ligand>
        <name>substrate</name>
    </ligand>
</feature>
<feature type="binding site" evidence="1">
    <location>
        <position position="162"/>
    </location>
    <ligand>
        <name>substrate</name>
    </ligand>
</feature>
<gene>
    <name evidence="1" type="primary">mdh</name>
    <name type="ordered locus">PPA1740</name>
</gene>
<protein>
    <recommendedName>
        <fullName evidence="1">Malate dehydrogenase</fullName>
        <ecNumber evidence="1">1.1.1.37</ecNumber>
    </recommendedName>
</protein>
<evidence type="ECO:0000255" key="1">
    <source>
        <dbReference type="HAMAP-Rule" id="MF_01517"/>
    </source>
</evidence>
<proteinExistence type="inferred from homology"/>
<reference key="1">
    <citation type="journal article" date="2004" name="Science">
        <title>The complete genome sequence of Propionibacterium acnes, a commensal of human skin.</title>
        <authorList>
            <person name="Brueggemann H."/>
            <person name="Henne A."/>
            <person name="Hoster F."/>
            <person name="Liesegang H."/>
            <person name="Wiezer A."/>
            <person name="Strittmatter A."/>
            <person name="Hujer S."/>
            <person name="Duerre P."/>
            <person name="Gottschalk G."/>
        </authorList>
    </citation>
    <scope>NUCLEOTIDE SEQUENCE [LARGE SCALE GENOMIC DNA]</scope>
    <source>
        <strain>DSM 16379 / KPA171202</strain>
    </source>
</reference>
<name>MDH_CUTAK</name>
<sequence length="327" mass="34686">MTQTPVKIAVTGAAGQICYSLLFRIASGSLLGDTPIELRLLEITPALKALEGVVMELDDCAFGNLVNIEIGDDPKKVFDGVNAAFLVGAMPRKAGMERSDLLTKNGAIFTAQGKALNDVAADDVRVLVTGNPANTNALIAATNAVDIPNNHFAALTRLDHNRAKTQLARKTGKTVNDVRHMTIWGNHSSTQYPDVFHAEVAGQKATNLVNEAWIENEFIPTVAKRGAAIIDARGASSAASAANATVECMRDWMGSTPEGDWVSMAIPSDGSYGVPEGLISSFPVTITNGKVEIVQGLDIDDFSRAKIDASAKELADERDAVKELGLI</sequence>
<dbReference type="EC" id="1.1.1.37" evidence="1"/>
<dbReference type="EMBL" id="AE017283">
    <property type="protein sequence ID" value="AAT83469.1"/>
    <property type="molecule type" value="Genomic_DNA"/>
</dbReference>
<dbReference type="RefSeq" id="WP_002516051.1">
    <property type="nucleotide sequence ID" value="NZ_CP025935.1"/>
</dbReference>
<dbReference type="SMR" id="Q6A6Z5"/>
<dbReference type="EnsemblBacteria" id="AAT83469">
    <property type="protein sequence ID" value="AAT83469"/>
    <property type="gene ID" value="PPA1740"/>
</dbReference>
<dbReference type="KEGG" id="pac:PPA1740"/>
<dbReference type="PATRIC" id="fig|267747.3.peg.1795"/>
<dbReference type="eggNOG" id="COG0039">
    <property type="taxonomic scope" value="Bacteria"/>
</dbReference>
<dbReference type="HOGENOM" id="CLU_040727_2_0_11"/>
<dbReference type="Proteomes" id="UP000000603">
    <property type="component" value="Chromosome"/>
</dbReference>
<dbReference type="GO" id="GO:0030060">
    <property type="term" value="F:L-malate dehydrogenase (NAD+) activity"/>
    <property type="evidence" value="ECO:0007669"/>
    <property type="project" value="UniProtKB-UniRule"/>
</dbReference>
<dbReference type="GO" id="GO:0006108">
    <property type="term" value="P:malate metabolic process"/>
    <property type="evidence" value="ECO:0007669"/>
    <property type="project" value="InterPro"/>
</dbReference>
<dbReference type="GO" id="GO:0006099">
    <property type="term" value="P:tricarboxylic acid cycle"/>
    <property type="evidence" value="ECO:0007669"/>
    <property type="project" value="UniProtKB-UniRule"/>
</dbReference>
<dbReference type="CDD" id="cd01338">
    <property type="entry name" value="MDH_chloroplast-like"/>
    <property type="match status" value="1"/>
</dbReference>
<dbReference type="FunFam" id="3.40.50.720:FF:000010">
    <property type="entry name" value="Malate dehydrogenase"/>
    <property type="match status" value="1"/>
</dbReference>
<dbReference type="FunFam" id="3.90.110.10:FF:000002">
    <property type="entry name" value="Malate dehydrogenase"/>
    <property type="match status" value="1"/>
</dbReference>
<dbReference type="Gene3D" id="3.90.110.10">
    <property type="entry name" value="Lactate dehydrogenase/glycoside hydrolase, family 4, C-terminal"/>
    <property type="match status" value="1"/>
</dbReference>
<dbReference type="Gene3D" id="3.40.50.720">
    <property type="entry name" value="NAD(P)-binding Rossmann-like Domain"/>
    <property type="match status" value="1"/>
</dbReference>
<dbReference type="HAMAP" id="MF_01517">
    <property type="entry name" value="Malate_dehydrog_2"/>
    <property type="match status" value="1"/>
</dbReference>
<dbReference type="InterPro" id="IPR001557">
    <property type="entry name" value="L-lactate/malate_DH"/>
</dbReference>
<dbReference type="InterPro" id="IPR022383">
    <property type="entry name" value="Lactate/malate_DH_C"/>
</dbReference>
<dbReference type="InterPro" id="IPR001236">
    <property type="entry name" value="Lactate/malate_DH_N"/>
</dbReference>
<dbReference type="InterPro" id="IPR015955">
    <property type="entry name" value="Lactate_DH/Glyco_Ohase_4_C"/>
</dbReference>
<dbReference type="InterPro" id="IPR001252">
    <property type="entry name" value="Malate_DH_AS"/>
</dbReference>
<dbReference type="InterPro" id="IPR010945">
    <property type="entry name" value="Malate_DH_type2"/>
</dbReference>
<dbReference type="InterPro" id="IPR036291">
    <property type="entry name" value="NAD(P)-bd_dom_sf"/>
</dbReference>
<dbReference type="NCBIfam" id="TIGR01759">
    <property type="entry name" value="MalateDH-SF1"/>
    <property type="match status" value="1"/>
</dbReference>
<dbReference type="NCBIfam" id="NF003916">
    <property type="entry name" value="PRK05442.1"/>
    <property type="match status" value="1"/>
</dbReference>
<dbReference type="PANTHER" id="PTHR23382">
    <property type="entry name" value="MALATE DEHYDROGENASE"/>
    <property type="match status" value="1"/>
</dbReference>
<dbReference type="Pfam" id="PF02866">
    <property type="entry name" value="Ldh_1_C"/>
    <property type="match status" value="1"/>
</dbReference>
<dbReference type="Pfam" id="PF00056">
    <property type="entry name" value="Ldh_1_N"/>
    <property type="match status" value="1"/>
</dbReference>
<dbReference type="PIRSF" id="PIRSF000102">
    <property type="entry name" value="Lac_mal_DH"/>
    <property type="match status" value="1"/>
</dbReference>
<dbReference type="SUPFAM" id="SSF56327">
    <property type="entry name" value="LDH C-terminal domain-like"/>
    <property type="match status" value="1"/>
</dbReference>
<dbReference type="SUPFAM" id="SSF51735">
    <property type="entry name" value="NAD(P)-binding Rossmann-fold domains"/>
    <property type="match status" value="1"/>
</dbReference>
<dbReference type="PROSITE" id="PS00068">
    <property type="entry name" value="MDH"/>
    <property type="match status" value="1"/>
</dbReference>
<organism>
    <name type="scientific">Cutibacterium acnes (strain DSM 16379 / KPA171202)</name>
    <name type="common">Propionibacterium acnes</name>
    <dbReference type="NCBI Taxonomy" id="267747"/>
    <lineage>
        <taxon>Bacteria</taxon>
        <taxon>Bacillati</taxon>
        <taxon>Actinomycetota</taxon>
        <taxon>Actinomycetes</taxon>
        <taxon>Propionibacteriales</taxon>
        <taxon>Propionibacteriaceae</taxon>
        <taxon>Cutibacterium</taxon>
    </lineage>
</organism>